<gene>
    <name type="ordered locus">Noc_2437</name>
</gene>
<evidence type="ECO:0000255" key="1">
    <source>
        <dbReference type="HAMAP-Rule" id="MF_00386"/>
    </source>
</evidence>
<feature type="chain" id="PRO_0000253132" description="Putative membrane protein insertion efficiency factor">
    <location>
        <begin position="1"/>
        <end position="78"/>
    </location>
</feature>
<proteinExistence type="inferred from homology"/>
<dbReference type="EMBL" id="CP000127">
    <property type="protein sequence ID" value="ABA58892.1"/>
    <property type="molecule type" value="Genomic_DNA"/>
</dbReference>
<dbReference type="FunCoup" id="Q3J8F4">
    <property type="interactions" value="273"/>
</dbReference>
<dbReference type="STRING" id="323261.Noc_2437"/>
<dbReference type="KEGG" id="noc:Noc_2437"/>
<dbReference type="eggNOG" id="COG0759">
    <property type="taxonomic scope" value="Bacteria"/>
</dbReference>
<dbReference type="HOGENOM" id="CLU_144811_6_1_6"/>
<dbReference type="InParanoid" id="Q3J8F4"/>
<dbReference type="Proteomes" id="UP000006838">
    <property type="component" value="Chromosome"/>
</dbReference>
<dbReference type="GO" id="GO:0005886">
    <property type="term" value="C:plasma membrane"/>
    <property type="evidence" value="ECO:0007669"/>
    <property type="project" value="UniProtKB-SubCell"/>
</dbReference>
<dbReference type="HAMAP" id="MF_00386">
    <property type="entry name" value="UPF0161_YidD"/>
    <property type="match status" value="1"/>
</dbReference>
<dbReference type="InterPro" id="IPR002696">
    <property type="entry name" value="Membr_insert_effic_factor_YidD"/>
</dbReference>
<dbReference type="NCBIfam" id="TIGR00278">
    <property type="entry name" value="membrane protein insertion efficiency factor YidD"/>
    <property type="match status" value="1"/>
</dbReference>
<dbReference type="PANTHER" id="PTHR33383">
    <property type="entry name" value="MEMBRANE PROTEIN INSERTION EFFICIENCY FACTOR-RELATED"/>
    <property type="match status" value="1"/>
</dbReference>
<dbReference type="PANTHER" id="PTHR33383:SF1">
    <property type="entry name" value="MEMBRANE PROTEIN INSERTION EFFICIENCY FACTOR-RELATED"/>
    <property type="match status" value="1"/>
</dbReference>
<dbReference type="Pfam" id="PF01809">
    <property type="entry name" value="YidD"/>
    <property type="match status" value="1"/>
</dbReference>
<dbReference type="SMART" id="SM01234">
    <property type="entry name" value="Haemolytic"/>
    <property type="match status" value="1"/>
</dbReference>
<comment type="function">
    <text evidence="1">Could be involved in insertion of integral membrane proteins into the membrane.</text>
</comment>
<comment type="subcellular location">
    <subcellularLocation>
        <location evidence="1">Cell inner membrane</location>
        <topology evidence="1">Peripheral membrane protein</topology>
        <orientation evidence="1">Cytoplasmic side</orientation>
    </subcellularLocation>
</comment>
<comment type="similarity">
    <text evidence="1">Belongs to the UPF0161 family.</text>
</comment>
<keyword id="KW-0997">Cell inner membrane</keyword>
<keyword id="KW-1003">Cell membrane</keyword>
<keyword id="KW-0472">Membrane</keyword>
<keyword id="KW-1185">Reference proteome</keyword>
<organism>
    <name type="scientific">Nitrosococcus oceani (strain ATCC 19707 / BCRC 17464 / JCM 30415 / NCIMB 11848 / C-107)</name>
    <dbReference type="NCBI Taxonomy" id="323261"/>
    <lineage>
        <taxon>Bacteria</taxon>
        <taxon>Pseudomonadati</taxon>
        <taxon>Pseudomonadota</taxon>
        <taxon>Gammaproteobacteria</taxon>
        <taxon>Chromatiales</taxon>
        <taxon>Chromatiaceae</taxon>
        <taxon>Nitrosococcus</taxon>
    </lineage>
</organism>
<sequence>MKNILLSLIIFYRYALSPFMGNHCRYYPSCSVYTQEAIQRYGGFRGGWLGLRRLLRCHPFCPGGIDQVPEIAKWRSKS</sequence>
<accession>Q3J8F4</accession>
<reference key="1">
    <citation type="journal article" date="2006" name="Appl. Environ. Microbiol.">
        <title>Complete genome sequence of the marine, chemolithoautotrophic, ammonia-oxidizing bacterium Nitrosococcus oceani ATCC 19707.</title>
        <authorList>
            <person name="Klotz M.G."/>
            <person name="Arp D.J."/>
            <person name="Chain P.S.G."/>
            <person name="El-Sheikh A.F."/>
            <person name="Hauser L.J."/>
            <person name="Hommes N.G."/>
            <person name="Larimer F.W."/>
            <person name="Malfatti S.A."/>
            <person name="Norton J.M."/>
            <person name="Poret-Peterson A.T."/>
            <person name="Vergez L.M."/>
            <person name="Ward B.B."/>
        </authorList>
    </citation>
    <scope>NUCLEOTIDE SEQUENCE [LARGE SCALE GENOMIC DNA]</scope>
    <source>
        <strain>ATCC 19707 / BCRC 17464 / JCM 30415 / NCIMB 11848 / C-107</strain>
    </source>
</reference>
<protein>
    <recommendedName>
        <fullName evidence="1">Putative membrane protein insertion efficiency factor</fullName>
    </recommendedName>
</protein>
<name>YIDD_NITOC</name>